<accession>C0MAM5</accession>
<evidence type="ECO:0000255" key="1">
    <source>
        <dbReference type="HAMAP-Rule" id="MF_00004"/>
    </source>
</evidence>
<name>APT_STRE4</name>
<sequence>MDLTQYIASIENYPKEGITFRDISPLMASGKAYSYAIREIVQYACDKDIDMIVGPEARGFIIGCPVAVELGIGFAPVRKPGKLPREVISASYEKEYGLDTLTMHADAIKPGQRVLIVDDLLATGGTVKATIDLVEKLGGIVAGCAFLIELDGLNGRQAIGDYDCKVLMHFPG</sequence>
<proteinExistence type="inferred from homology"/>
<reference key="1">
    <citation type="journal article" date="2009" name="PLoS Pathog.">
        <title>Genomic evidence for the evolution of Streptococcus equi: host restriction, increased virulence, and genetic exchange with human pathogens.</title>
        <authorList>
            <person name="Holden M.T.G."/>
            <person name="Heather Z."/>
            <person name="Paillot R."/>
            <person name="Steward K.F."/>
            <person name="Webb K."/>
            <person name="Ainslie F."/>
            <person name="Jourdan T."/>
            <person name="Bason N.C."/>
            <person name="Holroyd N.E."/>
            <person name="Mungall K."/>
            <person name="Quail M.A."/>
            <person name="Sanders M."/>
            <person name="Simmonds M."/>
            <person name="Willey D."/>
            <person name="Brooks K."/>
            <person name="Aanensen D.M."/>
            <person name="Spratt B.G."/>
            <person name="Jolley K.A."/>
            <person name="Maiden M.C.J."/>
            <person name="Kehoe M."/>
            <person name="Chanter N."/>
            <person name="Bentley S.D."/>
            <person name="Robinson C."/>
            <person name="Maskell D.J."/>
            <person name="Parkhill J."/>
            <person name="Waller A.S."/>
        </authorList>
    </citation>
    <scope>NUCLEOTIDE SEQUENCE [LARGE SCALE GENOMIC DNA]</scope>
    <source>
        <strain>4047</strain>
    </source>
</reference>
<feature type="chain" id="PRO_1000116257" description="Adenine phosphoribosyltransferase">
    <location>
        <begin position="1"/>
        <end position="172"/>
    </location>
</feature>
<dbReference type="EC" id="2.4.2.7" evidence="1"/>
<dbReference type="EMBL" id="FM204883">
    <property type="protein sequence ID" value="CAW94293.1"/>
    <property type="molecule type" value="Genomic_DNA"/>
</dbReference>
<dbReference type="RefSeq" id="WP_012515849.1">
    <property type="nucleotide sequence ID" value="NC_012471.1"/>
</dbReference>
<dbReference type="SMR" id="C0MAM5"/>
<dbReference type="KEGG" id="seu:SEQ_1425"/>
<dbReference type="HOGENOM" id="CLU_063339_3_0_9"/>
<dbReference type="OrthoDB" id="9803963at2"/>
<dbReference type="UniPathway" id="UPA00588">
    <property type="reaction ID" value="UER00646"/>
</dbReference>
<dbReference type="Proteomes" id="UP000001365">
    <property type="component" value="Chromosome"/>
</dbReference>
<dbReference type="GO" id="GO:0005737">
    <property type="term" value="C:cytoplasm"/>
    <property type="evidence" value="ECO:0007669"/>
    <property type="project" value="UniProtKB-SubCell"/>
</dbReference>
<dbReference type="GO" id="GO:0002055">
    <property type="term" value="F:adenine binding"/>
    <property type="evidence" value="ECO:0007669"/>
    <property type="project" value="TreeGrafter"/>
</dbReference>
<dbReference type="GO" id="GO:0003999">
    <property type="term" value="F:adenine phosphoribosyltransferase activity"/>
    <property type="evidence" value="ECO:0007669"/>
    <property type="project" value="UniProtKB-UniRule"/>
</dbReference>
<dbReference type="GO" id="GO:0016208">
    <property type="term" value="F:AMP binding"/>
    <property type="evidence" value="ECO:0007669"/>
    <property type="project" value="TreeGrafter"/>
</dbReference>
<dbReference type="GO" id="GO:0006168">
    <property type="term" value="P:adenine salvage"/>
    <property type="evidence" value="ECO:0007669"/>
    <property type="project" value="InterPro"/>
</dbReference>
<dbReference type="GO" id="GO:0044209">
    <property type="term" value="P:AMP salvage"/>
    <property type="evidence" value="ECO:0007669"/>
    <property type="project" value="UniProtKB-UniRule"/>
</dbReference>
<dbReference type="GO" id="GO:0006166">
    <property type="term" value="P:purine ribonucleoside salvage"/>
    <property type="evidence" value="ECO:0007669"/>
    <property type="project" value="UniProtKB-KW"/>
</dbReference>
<dbReference type="CDD" id="cd06223">
    <property type="entry name" value="PRTases_typeI"/>
    <property type="match status" value="1"/>
</dbReference>
<dbReference type="FunFam" id="3.40.50.2020:FF:000004">
    <property type="entry name" value="Adenine phosphoribosyltransferase"/>
    <property type="match status" value="1"/>
</dbReference>
<dbReference type="Gene3D" id="3.40.50.2020">
    <property type="match status" value="1"/>
</dbReference>
<dbReference type="HAMAP" id="MF_00004">
    <property type="entry name" value="Aden_phosphoribosyltr"/>
    <property type="match status" value="1"/>
</dbReference>
<dbReference type="InterPro" id="IPR005764">
    <property type="entry name" value="Ade_phspho_trans"/>
</dbReference>
<dbReference type="InterPro" id="IPR000836">
    <property type="entry name" value="PRibTrfase_dom"/>
</dbReference>
<dbReference type="InterPro" id="IPR029057">
    <property type="entry name" value="PRTase-like"/>
</dbReference>
<dbReference type="InterPro" id="IPR050054">
    <property type="entry name" value="UPRTase/APRTase"/>
</dbReference>
<dbReference type="NCBIfam" id="TIGR01090">
    <property type="entry name" value="apt"/>
    <property type="match status" value="1"/>
</dbReference>
<dbReference type="NCBIfam" id="NF002633">
    <property type="entry name" value="PRK02304.1-2"/>
    <property type="match status" value="1"/>
</dbReference>
<dbReference type="NCBIfam" id="NF002634">
    <property type="entry name" value="PRK02304.1-3"/>
    <property type="match status" value="1"/>
</dbReference>
<dbReference type="NCBIfam" id="NF002636">
    <property type="entry name" value="PRK02304.1-5"/>
    <property type="match status" value="1"/>
</dbReference>
<dbReference type="PANTHER" id="PTHR32315">
    <property type="entry name" value="ADENINE PHOSPHORIBOSYLTRANSFERASE"/>
    <property type="match status" value="1"/>
</dbReference>
<dbReference type="PANTHER" id="PTHR32315:SF3">
    <property type="entry name" value="ADENINE PHOSPHORIBOSYLTRANSFERASE"/>
    <property type="match status" value="1"/>
</dbReference>
<dbReference type="Pfam" id="PF00156">
    <property type="entry name" value="Pribosyltran"/>
    <property type="match status" value="1"/>
</dbReference>
<dbReference type="SUPFAM" id="SSF53271">
    <property type="entry name" value="PRTase-like"/>
    <property type="match status" value="1"/>
</dbReference>
<dbReference type="PROSITE" id="PS00103">
    <property type="entry name" value="PUR_PYR_PR_TRANSFER"/>
    <property type="match status" value="1"/>
</dbReference>
<protein>
    <recommendedName>
        <fullName evidence="1">Adenine phosphoribosyltransferase</fullName>
        <shortName evidence="1">APRT</shortName>
        <ecNumber evidence="1">2.4.2.7</ecNumber>
    </recommendedName>
</protein>
<gene>
    <name evidence="1" type="primary">apt</name>
    <name type="ordered locus">SEQ_1425</name>
</gene>
<keyword id="KW-0963">Cytoplasm</keyword>
<keyword id="KW-0328">Glycosyltransferase</keyword>
<keyword id="KW-0660">Purine salvage</keyword>
<keyword id="KW-0808">Transferase</keyword>
<organism>
    <name type="scientific">Streptococcus equi subsp. equi (strain 4047)</name>
    <dbReference type="NCBI Taxonomy" id="553482"/>
    <lineage>
        <taxon>Bacteria</taxon>
        <taxon>Bacillati</taxon>
        <taxon>Bacillota</taxon>
        <taxon>Bacilli</taxon>
        <taxon>Lactobacillales</taxon>
        <taxon>Streptococcaceae</taxon>
        <taxon>Streptococcus</taxon>
    </lineage>
</organism>
<comment type="function">
    <text evidence="1">Catalyzes a salvage reaction resulting in the formation of AMP, that is energically less costly than de novo synthesis.</text>
</comment>
<comment type="catalytic activity">
    <reaction evidence="1">
        <text>AMP + diphosphate = 5-phospho-alpha-D-ribose 1-diphosphate + adenine</text>
        <dbReference type="Rhea" id="RHEA:16609"/>
        <dbReference type="ChEBI" id="CHEBI:16708"/>
        <dbReference type="ChEBI" id="CHEBI:33019"/>
        <dbReference type="ChEBI" id="CHEBI:58017"/>
        <dbReference type="ChEBI" id="CHEBI:456215"/>
        <dbReference type="EC" id="2.4.2.7"/>
    </reaction>
</comment>
<comment type="pathway">
    <text evidence="1">Purine metabolism; AMP biosynthesis via salvage pathway; AMP from adenine: step 1/1.</text>
</comment>
<comment type="subunit">
    <text evidence="1">Homodimer.</text>
</comment>
<comment type="subcellular location">
    <subcellularLocation>
        <location evidence="1">Cytoplasm</location>
    </subcellularLocation>
</comment>
<comment type="similarity">
    <text evidence="1">Belongs to the purine/pyrimidine phosphoribosyltransferase family.</text>
</comment>